<reference key="1">
    <citation type="journal article" date="2007" name="Proc. Natl. Acad. Sci. U.S.A.">
        <title>Genome plasticity of BCG and impact on vaccine efficacy.</title>
        <authorList>
            <person name="Brosch R."/>
            <person name="Gordon S.V."/>
            <person name="Garnier T."/>
            <person name="Eiglmeier K."/>
            <person name="Frigui W."/>
            <person name="Valenti P."/>
            <person name="Dos Santos S."/>
            <person name="Duthoy S."/>
            <person name="Lacroix C."/>
            <person name="Garcia-Pelayo C."/>
            <person name="Inwald J.K."/>
            <person name="Golby P."/>
            <person name="Garcia J.N."/>
            <person name="Hewinson R.G."/>
            <person name="Behr M.A."/>
            <person name="Quail M.A."/>
            <person name="Churcher C."/>
            <person name="Barrell B.G."/>
            <person name="Parkhill J."/>
            <person name="Cole S.T."/>
        </authorList>
    </citation>
    <scope>NUCLEOTIDE SEQUENCE [LARGE SCALE GENOMIC DNA]</scope>
    <source>
        <strain>BCG / Pasteur 1173P2</strain>
    </source>
</reference>
<proteinExistence type="inferred from homology"/>
<dbReference type="EC" id="1.2.1.79"/>
<dbReference type="EMBL" id="AM408590">
    <property type="protein sequence ID" value="CAL71757.1"/>
    <property type="molecule type" value="Genomic_DNA"/>
</dbReference>
<dbReference type="RefSeq" id="WP_003898989.1">
    <property type="nucleotide sequence ID" value="NC_008769.1"/>
</dbReference>
<dbReference type="SMR" id="A1KJE8"/>
<dbReference type="KEGG" id="mbb:BCG_1770"/>
<dbReference type="HOGENOM" id="CLU_005391_1_0_11"/>
<dbReference type="Proteomes" id="UP000001472">
    <property type="component" value="Chromosome"/>
</dbReference>
<dbReference type="GO" id="GO:0036243">
    <property type="term" value="F:succinate-semialdehyde dehydrogenase (NADP+) activity"/>
    <property type="evidence" value="ECO:0007669"/>
    <property type="project" value="UniProtKB-EC"/>
</dbReference>
<dbReference type="CDD" id="cd07101">
    <property type="entry name" value="ALDH_SSADH2_GabD2"/>
    <property type="match status" value="1"/>
</dbReference>
<dbReference type="FunFam" id="3.40.309.10:FF:000009">
    <property type="entry name" value="Aldehyde dehydrogenase A"/>
    <property type="match status" value="1"/>
</dbReference>
<dbReference type="FunFam" id="3.40.605.10:FF:000010">
    <property type="entry name" value="N-succinylglutamate 5-semialdehyde dehydrogenase"/>
    <property type="match status" value="1"/>
</dbReference>
<dbReference type="Gene3D" id="3.40.605.10">
    <property type="entry name" value="Aldehyde Dehydrogenase, Chain A, domain 1"/>
    <property type="match status" value="1"/>
</dbReference>
<dbReference type="Gene3D" id="3.40.309.10">
    <property type="entry name" value="Aldehyde Dehydrogenase, Chain A, domain 2"/>
    <property type="match status" value="1"/>
</dbReference>
<dbReference type="InterPro" id="IPR016161">
    <property type="entry name" value="Ald_DH/histidinol_DH"/>
</dbReference>
<dbReference type="InterPro" id="IPR016163">
    <property type="entry name" value="Ald_DH_C"/>
</dbReference>
<dbReference type="InterPro" id="IPR029510">
    <property type="entry name" value="Ald_DH_CS_GLU"/>
</dbReference>
<dbReference type="InterPro" id="IPR016162">
    <property type="entry name" value="Ald_DH_N"/>
</dbReference>
<dbReference type="InterPro" id="IPR015590">
    <property type="entry name" value="Aldehyde_DH_dom"/>
</dbReference>
<dbReference type="NCBIfam" id="NF006916">
    <property type="entry name" value="PRK09407.1"/>
    <property type="match status" value="1"/>
</dbReference>
<dbReference type="PANTHER" id="PTHR11699">
    <property type="entry name" value="ALDEHYDE DEHYDROGENASE-RELATED"/>
    <property type="match status" value="1"/>
</dbReference>
<dbReference type="Pfam" id="PF00171">
    <property type="entry name" value="Aldedh"/>
    <property type="match status" value="1"/>
</dbReference>
<dbReference type="SUPFAM" id="SSF53720">
    <property type="entry name" value="ALDH-like"/>
    <property type="match status" value="1"/>
</dbReference>
<dbReference type="PROSITE" id="PS00687">
    <property type="entry name" value="ALDEHYDE_DEHYDR_GLU"/>
    <property type="match status" value="1"/>
</dbReference>
<sequence length="518" mass="55324">MPAPSAEVFDRLRNLAAIKDVAARPTRTIDEVFTGKPLTTIPVGTAADVEAAFAEARAAQTDWAKRPVIERAAVIRRYRDLVIENREFLMDLLQAEAGKARWAAQEEIVDLIANANYYARVCVDLLKPRKAQPLLPGIGKTTVCYQPKGVVGVISPWNYPMTLTVSDSVPALVAGNAVVLKPDSQTPYCALACAELLYRAGLPRALYAIVPGPGSVVGTAITDNCDYLMFTGSSATGSRLAEHAGRRLIGFSAELGGKNPMIVARGANLDKVAKAATRACFSNAGQLCISIERIYVEKDIAEEFTRKFGDAVRNMKLGTAYDFSVDMGSLISEAQLKTVSGHVDDATAKGAKVIAGGKARPDIGPLFYEPTVLTNVAPEMECAANETFGPVVSIYPVADVDEAVEKANDTDYGLNASVWAGSTAEGQRIAARLRSGTVNVDEGYAFAWGSLSAPMGGMGLSGVGRRHGPEGLLKYTESQTIATARVFNLDPPFGIPATVWQKSLLPIVRTVMKLPGRR</sequence>
<keyword id="KW-0521">NADP</keyword>
<keyword id="KW-0560">Oxidoreductase</keyword>
<organism>
    <name type="scientific">Mycobacterium bovis (strain BCG / Pasteur 1173P2)</name>
    <dbReference type="NCBI Taxonomy" id="410289"/>
    <lineage>
        <taxon>Bacteria</taxon>
        <taxon>Bacillati</taxon>
        <taxon>Actinomycetota</taxon>
        <taxon>Actinomycetes</taxon>
        <taxon>Mycobacteriales</taxon>
        <taxon>Mycobacteriaceae</taxon>
        <taxon>Mycobacterium</taxon>
        <taxon>Mycobacterium tuberculosis complex</taxon>
    </lineage>
</organism>
<protein>
    <recommendedName>
        <fullName>Putative succinate-semialdehyde dehydrogenase [NADP(+)] 2</fullName>
        <shortName>SSADH 2</shortName>
        <shortName>SSDH 2</shortName>
        <ecNumber>1.2.1.79</ecNumber>
    </recommendedName>
</protein>
<feature type="chain" id="PRO_0000310709" description="Putative succinate-semialdehyde dehydrogenase [NADP(+)] 2">
    <location>
        <begin position="1"/>
        <end position="518"/>
    </location>
</feature>
<feature type="active site" description="Proton acceptor" evidence="2">
    <location>
        <position position="254"/>
    </location>
</feature>
<feature type="active site" description="Nucleophile" evidence="2">
    <location>
        <position position="288"/>
    </location>
</feature>
<feature type="binding site" evidence="1">
    <location>
        <begin position="157"/>
        <end position="158"/>
    </location>
    <ligand>
        <name>NADP(+)</name>
        <dbReference type="ChEBI" id="CHEBI:58349"/>
    </ligand>
</feature>
<feature type="binding site" evidence="1">
    <location>
        <begin position="181"/>
        <end position="184"/>
    </location>
    <ligand>
        <name>NADP(+)</name>
        <dbReference type="ChEBI" id="CHEBI:58349"/>
    </ligand>
</feature>
<feature type="binding site" evidence="1">
    <location>
        <begin position="232"/>
        <end position="233"/>
    </location>
    <ligand>
        <name>NADP(+)</name>
        <dbReference type="ChEBI" id="CHEBI:58349"/>
    </ligand>
</feature>
<feature type="binding site" evidence="1">
    <location>
        <position position="255"/>
    </location>
    <ligand>
        <name>NADP(+)</name>
        <dbReference type="ChEBI" id="CHEBI:58349"/>
    </ligand>
</feature>
<feature type="binding site" evidence="1">
    <location>
        <position position="386"/>
    </location>
    <ligand>
        <name>NADP(+)</name>
        <dbReference type="ChEBI" id="CHEBI:58349"/>
    </ligand>
</feature>
<comment type="function">
    <text evidence="1">Catalyzes the NADP(+)-dependent oxidation of succinate semialdehyde to succinate. Although it has succinate semialdehyde dehydrogenase activity, is likely to act physiologically on a different aldehyde(s) (By similarity).</text>
</comment>
<comment type="catalytic activity">
    <reaction>
        <text>succinate semialdehyde + NADP(+) + H2O = succinate + NADPH + 2 H(+)</text>
        <dbReference type="Rhea" id="RHEA:13213"/>
        <dbReference type="ChEBI" id="CHEBI:15377"/>
        <dbReference type="ChEBI" id="CHEBI:15378"/>
        <dbReference type="ChEBI" id="CHEBI:30031"/>
        <dbReference type="ChEBI" id="CHEBI:57706"/>
        <dbReference type="ChEBI" id="CHEBI:57783"/>
        <dbReference type="ChEBI" id="CHEBI:58349"/>
        <dbReference type="EC" id="1.2.1.79"/>
    </reaction>
</comment>
<comment type="similarity">
    <text evidence="3">Belongs to the aldehyde dehydrogenase family.</text>
</comment>
<accession>A1KJE8</accession>
<name>GABD2_MYCBP</name>
<gene>
    <name type="primary">gabD2</name>
    <name type="ordered locus">BCG_1770</name>
</gene>
<evidence type="ECO:0000250" key="1"/>
<evidence type="ECO:0000255" key="2">
    <source>
        <dbReference type="PROSITE-ProRule" id="PRU10007"/>
    </source>
</evidence>
<evidence type="ECO:0000305" key="3"/>